<keyword id="KW-0244">Early protein</keyword>
<keyword id="KW-1185">Reference proteome</keyword>
<name>PG050_VAR67</name>
<reference key="1">
    <citation type="journal article" date="1993" name="Virus Res.">
        <title>Analysis of the nucleotide sequence of a 43 kbp segment of the genome of variola virus India-1967 strain.</title>
        <authorList>
            <person name="Shchelkunov S.N."/>
            <person name="Blinov V.M."/>
            <person name="Resenchuk S.M."/>
            <person name="Totmenin A.V."/>
            <person name="Sandakhchiev L.S."/>
        </authorList>
    </citation>
    <scope>NUCLEOTIDE SEQUENCE [GENOMIC DNA]</scope>
</reference>
<reference key="2">
    <citation type="journal article" date="1993" name="FEBS Lett.">
        <title>Genes of variola and vaccinia viruses necessary to overcome the host protective mechanisms.</title>
        <authorList>
            <person name="Shchelkunov S.N."/>
            <person name="Blinov V.M."/>
            <person name="Sandakhchiev L.S."/>
        </authorList>
    </citation>
    <scope>NUCLEOTIDE SEQUENCE [GENOMIC DNA]</scope>
</reference>
<evidence type="ECO:0000250" key="1">
    <source>
        <dbReference type="UniProtKB" id="P68603"/>
    </source>
</evidence>
<evidence type="ECO:0000305" key="2"/>
<gene>
    <name type="primary">OPG050</name>
    <name type="ORF">C10L</name>
    <name type="ORF">F6L</name>
</gene>
<organism>
    <name type="scientific">Variola virus (isolate Human/India/Ind3/1967)</name>
    <name type="common">VARV</name>
    <name type="synonym">Smallpox virus</name>
    <dbReference type="NCBI Taxonomy" id="587200"/>
    <lineage>
        <taxon>Viruses</taxon>
        <taxon>Varidnaviria</taxon>
        <taxon>Bamfordvirae</taxon>
        <taxon>Nucleocytoviricota</taxon>
        <taxon>Pokkesviricetes</taxon>
        <taxon>Chitovirales</taxon>
        <taxon>Poxviridae</taxon>
        <taxon>Chordopoxvirinae</taxon>
        <taxon>Orthopoxvirus</taxon>
        <taxon>Variola virus</taxon>
    </lineage>
</organism>
<comment type="induction">
    <text evidence="1">Expressed in the early phase of the viral replicative cycle.</text>
</comment>
<comment type="similarity">
    <text evidence="2">Belongs to the orthopoxvirus OPG050 family.</text>
</comment>
<organismHost>
    <name type="scientific">Homo sapiens</name>
    <name type="common">Human</name>
    <dbReference type="NCBI Taxonomy" id="9606"/>
</organismHost>
<accession>P0DOR9</accession>
<accession>P33866</accession>
<proteinExistence type="inferred from homology"/>
<feature type="chain" id="PRO_0000099482" description="Protein OPG050">
    <location>
        <begin position="1"/>
        <end position="72"/>
    </location>
</feature>
<sequence>MSKILTFVKNKIIDLIKNDQIKYSRVITIEESDSLLSVNEVYANHGFDCVEMIDENIINENLEQYKTDSFLQ</sequence>
<dbReference type="EMBL" id="X69198">
    <property type="protein sequence ID" value="CAA48971.1"/>
    <property type="molecule type" value="Genomic_DNA"/>
</dbReference>
<dbReference type="PIR" id="A36840">
    <property type="entry name" value="A36840"/>
</dbReference>
<dbReference type="RefSeq" id="NP_042074.1">
    <property type="nucleotide sequence ID" value="NC_001611.1"/>
</dbReference>
<dbReference type="GeneID" id="1486566"/>
<dbReference type="KEGG" id="vg:1486566"/>
<dbReference type="Proteomes" id="UP000002060">
    <property type="component" value="Segment"/>
</dbReference>
<dbReference type="InterPro" id="IPR009521">
    <property type="entry name" value="Orthopox_F6"/>
</dbReference>
<dbReference type="Pfam" id="PF06601">
    <property type="entry name" value="Orthopox_F6"/>
    <property type="match status" value="1"/>
</dbReference>
<protein>
    <recommendedName>
        <fullName>Protein OPG050</fullName>
    </recommendedName>
    <alternativeName>
        <fullName>Protein F6</fullName>
    </alternativeName>
</protein>